<organism>
    <name type="scientific">Danio rerio</name>
    <name type="common">Zebrafish</name>
    <name type="synonym">Brachydanio rerio</name>
    <dbReference type="NCBI Taxonomy" id="7955"/>
    <lineage>
        <taxon>Eukaryota</taxon>
        <taxon>Metazoa</taxon>
        <taxon>Chordata</taxon>
        <taxon>Craniata</taxon>
        <taxon>Vertebrata</taxon>
        <taxon>Euteleostomi</taxon>
        <taxon>Actinopterygii</taxon>
        <taxon>Neopterygii</taxon>
        <taxon>Teleostei</taxon>
        <taxon>Ostariophysi</taxon>
        <taxon>Cypriniformes</taxon>
        <taxon>Danionidae</taxon>
        <taxon>Danioninae</taxon>
        <taxon>Danio</taxon>
    </lineage>
</organism>
<accession>A4QNX2</accession>
<protein>
    <recommendedName>
        <fullName>Solute carrier family 25 member 47-B</fullName>
    </recommendedName>
    <alternativeName>
        <fullName>Hepatocellular carcinoma down-regulated mitochondrial carrier homolog B</fullName>
    </alternativeName>
</protein>
<feature type="chain" id="PRO_0000291783" description="Solute carrier family 25 member 47-B">
    <location>
        <begin position="1"/>
        <end position="288"/>
    </location>
</feature>
<feature type="transmembrane region" description="Helical; Name=1" evidence="2">
    <location>
        <begin position="3"/>
        <end position="23"/>
    </location>
</feature>
<feature type="transmembrane region" description="Helical; Name=2" evidence="2">
    <location>
        <begin position="58"/>
        <end position="75"/>
    </location>
</feature>
<feature type="transmembrane region" description="Helical; Name=3" evidence="2">
    <location>
        <begin position="101"/>
        <end position="121"/>
    </location>
</feature>
<feature type="transmembrane region" description="Helical; Name=4" evidence="2">
    <location>
        <begin position="175"/>
        <end position="195"/>
    </location>
</feature>
<feature type="transmembrane region" description="Helical; Name=5" evidence="2">
    <location>
        <begin position="199"/>
        <end position="219"/>
    </location>
</feature>
<feature type="transmembrane region" description="Helical; Name=6" evidence="2">
    <location>
        <begin position="257"/>
        <end position="277"/>
    </location>
</feature>
<feature type="repeat" description="Solcar 1">
    <location>
        <begin position="1"/>
        <end position="83"/>
    </location>
</feature>
<feature type="repeat" description="Solcar 2">
    <location>
        <begin position="99"/>
        <end position="191"/>
    </location>
</feature>
<feature type="repeat" description="Solcar 3">
    <location>
        <begin position="199"/>
        <end position="286"/>
    </location>
</feature>
<evidence type="ECO:0000250" key="1"/>
<evidence type="ECO:0000255" key="2"/>
<evidence type="ECO:0000305" key="3"/>
<reference key="1">
    <citation type="submission" date="2007-04" db="EMBL/GenBank/DDBJ databases">
        <authorList>
            <consortium name="NIH - Zebrafish Gene Collection (ZGC) project"/>
        </authorList>
    </citation>
    <scope>NUCLEOTIDE SEQUENCE [LARGE SCALE MRNA]</scope>
    <source>
        <strain>AB</strain>
        <tissue>Egg</tissue>
    </source>
</reference>
<keyword id="KW-0472">Membrane</keyword>
<keyword id="KW-0496">Mitochondrion</keyword>
<keyword id="KW-0999">Mitochondrion inner membrane</keyword>
<keyword id="KW-1185">Reference proteome</keyword>
<keyword id="KW-0677">Repeat</keyword>
<keyword id="KW-0812">Transmembrane</keyword>
<keyword id="KW-1133">Transmembrane helix</keyword>
<keyword id="KW-0813">Transport</keyword>
<gene>
    <name type="primary">slc25a47b</name>
    <name type="synonym">hdmcpb</name>
    <name type="ORF">zgc:162249</name>
</gene>
<comment type="subcellular location">
    <subcellularLocation>
        <location evidence="1">Mitochondrion inner membrane</location>
        <topology evidence="1">Multi-pass membrane protein</topology>
    </subcellularLocation>
</comment>
<comment type="similarity">
    <text evidence="3">Belongs to the mitochondrial carrier (TC 2.A.29) family.</text>
</comment>
<name>S247B_DANRE</name>
<dbReference type="EMBL" id="BC139556">
    <property type="protein sequence ID" value="AAI39557.1"/>
    <property type="molecule type" value="mRNA"/>
</dbReference>
<dbReference type="RefSeq" id="NP_001083050.1">
    <property type="nucleotide sequence ID" value="NM_001089581.1"/>
</dbReference>
<dbReference type="SMR" id="A4QNX2"/>
<dbReference type="FunCoup" id="A4QNX2">
    <property type="interactions" value="3"/>
</dbReference>
<dbReference type="STRING" id="7955.ENSDARP00000134608"/>
<dbReference type="PaxDb" id="7955-ENSDARP00000105896"/>
<dbReference type="GeneID" id="100006442"/>
<dbReference type="KEGG" id="dre:100006442"/>
<dbReference type="AGR" id="ZFIN:ZDB-GENE-070424-85"/>
<dbReference type="CTD" id="100006442"/>
<dbReference type="ZFIN" id="ZDB-GENE-070424-85">
    <property type="gene designation" value="slc25a47b"/>
</dbReference>
<dbReference type="eggNOG" id="KOG0758">
    <property type="taxonomic scope" value="Eukaryota"/>
</dbReference>
<dbReference type="InParanoid" id="A4QNX2"/>
<dbReference type="OrthoDB" id="193856at2759"/>
<dbReference type="PhylomeDB" id="A4QNX2"/>
<dbReference type="PRO" id="PR:A4QNX2"/>
<dbReference type="Proteomes" id="UP000000437">
    <property type="component" value="Chromosome 17"/>
</dbReference>
<dbReference type="GO" id="GO:0005743">
    <property type="term" value="C:mitochondrial inner membrane"/>
    <property type="evidence" value="ECO:0007669"/>
    <property type="project" value="UniProtKB-SubCell"/>
</dbReference>
<dbReference type="GO" id="GO:0005739">
    <property type="term" value="C:mitochondrion"/>
    <property type="evidence" value="ECO:0000318"/>
    <property type="project" value="GO_Central"/>
</dbReference>
<dbReference type="GO" id="GO:0022857">
    <property type="term" value="F:transmembrane transporter activity"/>
    <property type="evidence" value="ECO:0000318"/>
    <property type="project" value="GO_Central"/>
</dbReference>
<dbReference type="FunFam" id="1.50.40.10:FF:000049">
    <property type="entry name" value="Solute carrier family 25 member 45"/>
    <property type="match status" value="1"/>
</dbReference>
<dbReference type="Gene3D" id="1.50.40.10">
    <property type="entry name" value="Mitochondrial carrier domain"/>
    <property type="match status" value="1"/>
</dbReference>
<dbReference type="InterPro" id="IPR002067">
    <property type="entry name" value="Mit_carrier"/>
</dbReference>
<dbReference type="InterPro" id="IPR050567">
    <property type="entry name" value="Mitochondrial_Carrier"/>
</dbReference>
<dbReference type="InterPro" id="IPR018108">
    <property type="entry name" value="Mitochondrial_sb/sol_carrier"/>
</dbReference>
<dbReference type="InterPro" id="IPR023395">
    <property type="entry name" value="Mt_carrier_dom_sf"/>
</dbReference>
<dbReference type="PANTHER" id="PTHR45624">
    <property type="entry name" value="MITOCHONDRIAL BASIC AMINO ACIDS TRANSPORTER-RELATED"/>
    <property type="match status" value="1"/>
</dbReference>
<dbReference type="PANTHER" id="PTHR45624:SF3">
    <property type="entry name" value="SOLUTE CARRIER FAMILY 25 MEMBER 47"/>
    <property type="match status" value="1"/>
</dbReference>
<dbReference type="Pfam" id="PF00153">
    <property type="entry name" value="Mito_carr"/>
    <property type="match status" value="3"/>
</dbReference>
<dbReference type="PRINTS" id="PR00926">
    <property type="entry name" value="MITOCARRIER"/>
</dbReference>
<dbReference type="SUPFAM" id="SSF103506">
    <property type="entry name" value="Mitochondrial carrier"/>
    <property type="match status" value="1"/>
</dbReference>
<dbReference type="PROSITE" id="PS50920">
    <property type="entry name" value="SOLCAR"/>
    <property type="match status" value="3"/>
</dbReference>
<sequence length="288" mass="31537">MHLADFLAGSVGGAFGVAVGYPLDTVKVRLQTQTGYSGFWQCVRKTCRNEGLQGFYRGMSMPISTVSISSSLVFGTYRNILQFLHQLQHRSAGEPHHKAHIFLAGFTGGVTQVLVMAPADIVKVRLQCQTEPVQHISQESSSKYRGPVQCLLRIARDEGLLGLYKGSAALALRDGPSFATYFLTYNTICEILTTENQRPGWPVVLLAGGVSGMCGWAVGTPMDVIKSRLQVDGVSGRRYRGFLHCITHSVRTEGSGVLFRGLTVNCIRAFPVNMSVFAMYEAVVRLLR</sequence>
<proteinExistence type="evidence at transcript level"/>